<feature type="chain" id="PRO_0000271602" description="Late cornified envelope-like proline-rich protein 1">
    <location>
        <begin position="1"/>
        <end position="110"/>
    </location>
</feature>
<feature type="region of interest" description="Disordered" evidence="1">
    <location>
        <begin position="1"/>
        <end position="24"/>
    </location>
</feature>
<organism>
    <name type="scientific">Bos taurus</name>
    <name type="common">Bovine</name>
    <dbReference type="NCBI Taxonomy" id="9913"/>
    <lineage>
        <taxon>Eukaryota</taxon>
        <taxon>Metazoa</taxon>
        <taxon>Chordata</taxon>
        <taxon>Craniata</taxon>
        <taxon>Vertebrata</taxon>
        <taxon>Euteleostomi</taxon>
        <taxon>Mammalia</taxon>
        <taxon>Eutheria</taxon>
        <taxon>Laurasiatheria</taxon>
        <taxon>Artiodactyla</taxon>
        <taxon>Ruminantia</taxon>
        <taxon>Pecora</taxon>
        <taxon>Bovidae</taxon>
        <taxon>Bovinae</taxon>
        <taxon>Bos</taxon>
    </lineage>
</organism>
<sequence length="110" mass="11767">MSSDDKNKPGEPKNEPKQCDPGCEQKCETKCQPSCLKRLLQRCSEKCQPPKCPPPKCTPCPPCPPSCPPPPKCPPPCPPPCPPPCPPPCPPKPCVKSCPPKCPPPCPPPE</sequence>
<evidence type="ECO:0000256" key="1">
    <source>
        <dbReference type="SAM" id="MobiDB-lite"/>
    </source>
</evidence>
<evidence type="ECO:0000305" key="2"/>
<proteinExistence type="inferred from homology"/>
<gene>
    <name type="primary">LELP1</name>
</gene>
<reference key="1">
    <citation type="submission" date="2005-11" db="EMBL/GenBank/DDBJ databases">
        <authorList>
            <consortium name="NIH - Mammalian Gene Collection (MGC) project"/>
        </authorList>
    </citation>
    <scope>NUCLEOTIDE SEQUENCE [LARGE SCALE MRNA]</scope>
    <source>
        <strain>Crossbred X Angus</strain>
        <tissue>Liver</tissue>
    </source>
</reference>
<keyword id="KW-1185">Reference proteome</keyword>
<name>LELP1_BOVIN</name>
<dbReference type="EMBL" id="BC109827">
    <property type="protein sequence ID" value="AAI09828.1"/>
    <property type="molecule type" value="mRNA"/>
</dbReference>
<dbReference type="RefSeq" id="NP_001070524.1">
    <property type="nucleotide sequence ID" value="NM_001077056.2"/>
</dbReference>
<dbReference type="Ensembl" id="ENSBTAT00000046842.2">
    <property type="protein sequence ID" value="ENSBTAP00000044090.1"/>
    <property type="gene ID" value="ENSBTAG00000032995.2"/>
</dbReference>
<dbReference type="GeneID" id="767996"/>
<dbReference type="KEGG" id="bta:767996"/>
<dbReference type="CTD" id="149018"/>
<dbReference type="VEuPathDB" id="HostDB:ENSBTAG00000032995"/>
<dbReference type="VGNC" id="VGNC:30834">
    <property type="gene designation" value="LELP1"/>
</dbReference>
<dbReference type="eggNOG" id="ENOG502RTZC">
    <property type="taxonomic scope" value="Eukaryota"/>
</dbReference>
<dbReference type="GeneTree" id="ENSGT00730000111592"/>
<dbReference type="HOGENOM" id="CLU_2269932_0_0_1"/>
<dbReference type="InParanoid" id="Q32L04"/>
<dbReference type="OMA" id="KCESKCQ"/>
<dbReference type="OrthoDB" id="9717571at2759"/>
<dbReference type="Proteomes" id="UP000009136">
    <property type="component" value="Chromosome 3"/>
</dbReference>
<dbReference type="Bgee" id="ENSBTAG00000032995">
    <property type="expression patterns" value="Expressed in semen and 15 other cell types or tissues"/>
</dbReference>
<dbReference type="InterPro" id="IPR026076">
    <property type="entry name" value="Lelp1"/>
</dbReference>
<dbReference type="Pfam" id="PF15042">
    <property type="entry name" value="LELP1"/>
    <property type="match status" value="1"/>
</dbReference>
<dbReference type="PRINTS" id="PR01217">
    <property type="entry name" value="PRICHEXTENSN"/>
</dbReference>
<dbReference type="PRINTS" id="PR00021">
    <property type="entry name" value="PRORICH"/>
</dbReference>
<accession>Q32L04</accession>
<protein>
    <recommendedName>
        <fullName>Late cornified envelope-like proline-rich protein 1</fullName>
    </recommendedName>
</protein>
<comment type="similarity">
    <text evidence="2">Belongs to the cornifin (SPRR) family.</text>
</comment>